<keyword id="KW-0238">DNA-binding</keyword>
<keyword id="KW-0408">Iron</keyword>
<keyword id="KW-0411">Iron-sulfur</keyword>
<keyword id="KW-0479">Metal-binding</keyword>
<keyword id="KW-1185">Reference proteome</keyword>
<keyword id="KW-0678">Repressor</keyword>
<keyword id="KW-0804">Transcription</keyword>
<keyword id="KW-0805">Transcription regulation</keyword>
<feature type="chain" id="PRO_0000313058" description="Probable [Fe-S]-dependent transcriptional repressor">
    <location>
        <begin position="1"/>
        <end position="78"/>
    </location>
</feature>
<feature type="binding site" evidence="1">
    <location>
        <position position="56"/>
    </location>
    <ligand>
        <name>iron-sulfur cluster</name>
        <dbReference type="ChEBI" id="CHEBI:30408"/>
    </ligand>
</feature>
<feature type="binding site" evidence="1">
    <location>
        <position position="61"/>
    </location>
    <ligand>
        <name>iron-sulfur cluster</name>
        <dbReference type="ChEBI" id="CHEBI:30408"/>
    </ligand>
</feature>
<feature type="binding site" evidence="1">
    <location>
        <position position="64"/>
    </location>
    <ligand>
        <name>iron-sulfur cluster</name>
        <dbReference type="ChEBI" id="CHEBI:30408"/>
    </ligand>
</feature>
<feature type="binding site" evidence="1">
    <location>
        <position position="70"/>
    </location>
    <ligand>
        <name>iron-sulfur cluster</name>
        <dbReference type="ChEBI" id="CHEBI:30408"/>
    </ligand>
</feature>
<gene>
    <name evidence="1" type="primary">feoC</name>
    <name type="ordered locus">Ecok1_33805</name>
    <name type="ORF">APECO1_3055.1</name>
</gene>
<organism>
    <name type="scientific">Escherichia coli O1:K1 / APEC</name>
    <dbReference type="NCBI Taxonomy" id="405955"/>
    <lineage>
        <taxon>Bacteria</taxon>
        <taxon>Pseudomonadati</taxon>
        <taxon>Pseudomonadota</taxon>
        <taxon>Gammaproteobacteria</taxon>
        <taxon>Enterobacterales</taxon>
        <taxon>Enterobacteriaceae</taxon>
        <taxon>Escherichia</taxon>
    </lineage>
</organism>
<name>FEOC_ECOK1</name>
<reference key="1">
    <citation type="journal article" date="2007" name="J. Bacteriol.">
        <title>The genome sequence of avian pathogenic Escherichia coli strain O1:K1:H7 shares strong similarities with human extraintestinal pathogenic E. coli genomes.</title>
        <authorList>
            <person name="Johnson T.J."/>
            <person name="Kariyawasam S."/>
            <person name="Wannemuehler Y."/>
            <person name="Mangiamele P."/>
            <person name="Johnson S.J."/>
            <person name="Doetkott C."/>
            <person name="Skyberg J.A."/>
            <person name="Lynne A.M."/>
            <person name="Johnson J.R."/>
            <person name="Nolan L.K."/>
        </authorList>
    </citation>
    <scope>NUCLEOTIDE SEQUENCE [LARGE SCALE GENOMIC DNA]</scope>
</reference>
<evidence type="ECO:0000255" key="1">
    <source>
        <dbReference type="HAMAP-Rule" id="MF_01586"/>
    </source>
</evidence>
<protein>
    <recommendedName>
        <fullName evidence="1">Probable [Fe-S]-dependent transcriptional repressor</fullName>
    </recommendedName>
</protein>
<accession>P0C602</accession>
<comment type="function">
    <text evidence="1">May function as a transcriptional regulator that controls feoABC expression.</text>
</comment>
<comment type="similarity">
    <text evidence="1">Belongs to the FeoC family.</text>
</comment>
<proteinExistence type="inferred from homology"/>
<sequence length="78" mass="8641">MASLIQVRDLLALRGRMEAAQISQTLNTPQPMINAMLKQLESMGKAVRIQEEPDGCLSGSCKSCPEGKACLHEWWALR</sequence>
<dbReference type="EMBL" id="CP000468">
    <property type="status" value="NOT_ANNOTATED_CDS"/>
    <property type="molecule type" value="Genomic_DNA"/>
</dbReference>
<dbReference type="RefSeq" id="WP_000157585.1">
    <property type="nucleotide sequence ID" value="NZ_CADILS010000030.1"/>
</dbReference>
<dbReference type="SMR" id="P0C602"/>
<dbReference type="Proteomes" id="UP000008216">
    <property type="component" value="Chromosome"/>
</dbReference>
<dbReference type="GO" id="GO:0003677">
    <property type="term" value="F:DNA binding"/>
    <property type="evidence" value="ECO:0007669"/>
    <property type="project" value="UniProtKB-KW"/>
</dbReference>
<dbReference type="GO" id="GO:0005506">
    <property type="term" value="F:iron ion binding"/>
    <property type="evidence" value="ECO:0007669"/>
    <property type="project" value="UniProtKB-UniRule"/>
</dbReference>
<dbReference type="GO" id="GO:0051536">
    <property type="term" value="F:iron-sulfur cluster binding"/>
    <property type="evidence" value="ECO:0007669"/>
    <property type="project" value="UniProtKB-KW"/>
</dbReference>
<dbReference type="Gene3D" id="1.10.10.10">
    <property type="entry name" value="Winged helix-like DNA-binding domain superfamily/Winged helix DNA-binding domain"/>
    <property type="match status" value="1"/>
</dbReference>
<dbReference type="HAMAP" id="MF_01586">
    <property type="entry name" value="FeoC"/>
    <property type="match status" value="1"/>
</dbReference>
<dbReference type="InterPro" id="IPR023732">
    <property type="entry name" value="FeoC"/>
</dbReference>
<dbReference type="InterPro" id="IPR015102">
    <property type="entry name" value="Tscrpt_reg_HTH_FeoC"/>
</dbReference>
<dbReference type="InterPro" id="IPR036388">
    <property type="entry name" value="WH-like_DNA-bd_sf"/>
</dbReference>
<dbReference type="InterPro" id="IPR036390">
    <property type="entry name" value="WH_DNA-bd_sf"/>
</dbReference>
<dbReference type="NCBIfam" id="NF011960">
    <property type="entry name" value="PRK15431.1"/>
    <property type="match status" value="1"/>
</dbReference>
<dbReference type="Pfam" id="PF09012">
    <property type="entry name" value="FeoC"/>
    <property type="match status" value="1"/>
</dbReference>
<dbReference type="SUPFAM" id="SSF46785">
    <property type="entry name" value="Winged helix' DNA-binding domain"/>
    <property type="match status" value="1"/>
</dbReference>